<comment type="function">
    <text evidence="1">May be involved in splicing.</text>
</comment>
<comment type="subcellular location">
    <subcellularLocation>
        <location evidence="1">Cytoplasm</location>
    </subcellularLocation>
    <subcellularLocation>
        <location evidence="1">Nucleus</location>
    </subcellularLocation>
</comment>
<comment type="similarity">
    <text evidence="4">Belongs to the SQS1 family.</text>
</comment>
<evidence type="ECO:0000250" key="1"/>
<evidence type="ECO:0000255" key="2">
    <source>
        <dbReference type="PROSITE-ProRule" id="PRU00092"/>
    </source>
</evidence>
<evidence type="ECO:0000256" key="3">
    <source>
        <dbReference type="SAM" id="MobiDB-lite"/>
    </source>
</evidence>
<evidence type="ECO:0000305" key="4"/>
<keyword id="KW-0963">Cytoplasm</keyword>
<keyword id="KW-0507">mRNA processing</keyword>
<keyword id="KW-0508">mRNA splicing</keyword>
<keyword id="KW-0539">Nucleus</keyword>
<keyword id="KW-1185">Reference proteome</keyword>
<dbReference type="EMBL" id="CH981524">
    <property type="protein sequence ID" value="EDK42073.1"/>
    <property type="molecule type" value="Genomic_DNA"/>
</dbReference>
<dbReference type="RefSeq" id="XP_001527731.1">
    <property type="nucleotide sequence ID" value="XM_001527681.1"/>
</dbReference>
<dbReference type="SMR" id="A5DSB5"/>
<dbReference type="FunCoup" id="A5DSB5">
    <property type="interactions" value="247"/>
</dbReference>
<dbReference type="STRING" id="379508.A5DSB5"/>
<dbReference type="VEuPathDB" id="FungiDB:LELG_00251"/>
<dbReference type="eggNOG" id="KOG0154">
    <property type="taxonomic scope" value="Eukaryota"/>
</dbReference>
<dbReference type="HOGENOM" id="CLU_021974_1_0_1"/>
<dbReference type="InParanoid" id="A5DSB5"/>
<dbReference type="OMA" id="PVFMRID"/>
<dbReference type="OrthoDB" id="21470at2759"/>
<dbReference type="Proteomes" id="UP000001996">
    <property type="component" value="Unassembled WGS sequence"/>
</dbReference>
<dbReference type="GO" id="GO:0005737">
    <property type="term" value="C:cytoplasm"/>
    <property type="evidence" value="ECO:0007669"/>
    <property type="project" value="UniProtKB-SubCell"/>
</dbReference>
<dbReference type="GO" id="GO:0005634">
    <property type="term" value="C:nucleus"/>
    <property type="evidence" value="ECO:0007669"/>
    <property type="project" value="UniProtKB-SubCell"/>
</dbReference>
<dbReference type="GO" id="GO:0003676">
    <property type="term" value="F:nucleic acid binding"/>
    <property type="evidence" value="ECO:0007669"/>
    <property type="project" value="InterPro"/>
</dbReference>
<dbReference type="GO" id="GO:0006397">
    <property type="term" value="P:mRNA processing"/>
    <property type="evidence" value="ECO:0007669"/>
    <property type="project" value="UniProtKB-KW"/>
</dbReference>
<dbReference type="GO" id="GO:0008380">
    <property type="term" value="P:RNA splicing"/>
    <property type="evidence" value="ECO:0007669"/>
    <property type="project" value="UniProtKB-KW"/>
</dbReference>
<dbReference type="CDD" id="cd02646">
    <property type="entry name" value="R3H_G-patch"/>
    <property type="match status" value="1"/>
</dbReference>
<dbReference type="InterPro" id="IPR000467">
    <property type="entry name" value="G_patch_dom"/>
</dbReference>
<dbReference type="InterPro" id="IPR034082">
    <property type="entry name" value="R3H_G-patch"/>
</dbReference>
<dbReference type="InterPro" id="IPR051189">
    <property type="entry name" value="Splicing_assoc_domain"/>
</dbReference>
<dbReference type="PANTHER" id="PTHR14195">
    <property type="entry name" value="G PATCH DOMAIN CONTAINING PROTEIN 2"/>
    <property type="match status" value="1"/>
</dbReference>
<dbReference type="Pfam" id="PF01585">
    <property type="entry name" value="G-patch"/>
    <property type="match status" value="1"/>
</dbReference>
<dbReference type="SMART" id="SM00443">
    <property type="entry name" value="G_patch"/>
    <property type="match status" value="1"/>
</dbReference>
<dbReference type="PROSITE" id="PS50174">
    <property type="entry name" value="G_PATCH"/>
    <property type="match status" value="1"/>
</dbReference>
<feature type="chain" id="PRO_0000324998" description="Protein SQS1">
    <location>
        <begin position="1"/>
        <end position="792"/>
    </location>
</feature>
<feature type="domain" description="R3H">
    <location>
        <begin position="619"/>
        <end position="683"/>
    </location>
</feature>
<feature type="domain" description="G-patch" evidence="2">
    <location>
        <begin position="750"/>
        <end position="792"/>
    </location>
</feature>
<feature type="region of interest" description="Disordered" evidence="3">
    <location>
        <begin position="1"/>
        <end position="47"/>
    </location>
</feature>
<feature type="region of interest" description="Disordered" evidence="3">
    <location>
        <begin position="139"/>
        <end position="209"/>
    </location>
</feature>
<feature type="region of interest" description="Disordered" evidence="3">
    <location>
        <begin position="225"/>
        <end position="327"/>
    </location>
</feature>
<feature type="region of interest" description="Disordered" evidence="3">
    <location>
        <begin position="343"/>
        <end position="364"/>
    </location>
</feature>
<feature type="region of interest" description="Disordered" evidence="3">
    <location>
        <begin position="494"/>
        <end position="530"/>
    </location>
</feature>
<feature type="region of interest" description="Disordered" evidence="3">
    <location>
        <begin position="709"/>
        <end position="734"/>
    </location>
</feature>
<feature type="compositionally biased region" description="Basic residues" evidence="3">
    <location>
        <begin position="1"/>
        <end position="11"/>
    </location>
</feature>
<feature type="compositionally biased region" description="Basic residues" evidence="3">
    <location>
        <begin position="24"/>
        <end position="35"/>
    </location>
</feature>
<feature type="compositionally biased region" description="Polar residues" evidence="3">
    <location>
        <begin position="36"/>
        <end position="47"/>
    </location>
</feature>
<feature type="compositionally biased region" description="Acidic residues" evidence="3">
    <location>
        <begin position="145"/>
        <end position="209"/>
    </location>
</feature>
<feature type="compositionally biased region" description="Basic and acidic residues" evidence="3">
    <location>
        <begin position="234"/>
        <end position="248"/>
    </location>
</feature>
<feature type="compositionally biased region" description="Polar residues" evidence="3">
    <location>
        <begin position="265"/>
        <end position="274"/>
    </location>
</feature>
<feature type="compositionally biased region" description="Acidic residues" evidence="3">
    <location>
        <begin position="277"/>
        <end position="316"/>
    </location>
</feature>
<feature type="compositionally biased region" description="Acidic residues" evidence="3">
    <location>
        <begin position="496"/>
        <end position="515"/>
    </location>
</feature>
<organism>
    <name type="scientific">Lodderomyces elongisporus (strain ATCC 11503 / CBS 2605 / JCM 1781 / NBRC 1676 / NRRL YB-4239)</name>
    <name type="common">Yeast</name>
    <name type="synonym">Saccharomyces elongisporus</name>
    <dbReference type="NCBI Taxonomy" id="379508"/>
    <lineage>
        <taxon>Eukaryota</taxon>
        <taxon>Fungi</taxon>
        <taxon>Dikarya</taxon>
        <taxon>Ascomycota</taxon>
        <taxon>Saccharomycotina</taxon>
        <taxon>Pichiomycetes</taxon>
        <taxon>Debaryomycetaceae</taxon>
        <taxon>Candida/Lodderomyces clade</taxon>
        <taxon>Lodderomyces</taxon>
    </lineage>
</organism>
<proteinExistence type="inferred from homology"/>
<accession>A5DSB5</accession>
<name>SQS1_LODEL</name>
<sequence>MPKRGNRRTRGSRGGSRGGSRNLLKNRTRGNKRKSPSSNTYNRLSSSQYQELMDLDSIYIPNGEMAEVGRNMGRRRYGKLAEEAAYTESHRYEDFASKTFRNRPIEFIKAKEVYDPNVILHKLTQEKKTQYGDIIDEEFKSISLDDSEADSEADDDDEEEEEEEEEEKDGQEMENENETDDANEEADEQSSELWNDEEEGDSQEDWDEEELRKVLDKKLVQLQKELDLEQDVGIVEKNEKDIIDKEDKESDVDDSILNADKENSEQFVNIGKNQSEIESEDEDGDEEEEQDLDENNDFEDDSDDDLDDASIEDINGEEFAKQNDVSSISYLDENNIYSEKLSRDESLDSIPGSKNVDNSSSLEEITVKSKPKDLVKNATNNFINCNERTGKDKPESEPEYGFLEEDYEFDVSKIEVSNVRFGISNQYYVKCAELTGTTVDEFFWFDEEDVIDYVLANGVKEHRLAKFLSFVTKGMVGGNESESQEDLDAFTIDVNGLDDDDESDDDEDDDEDEDENKFASGQDDYPYDSEDGLEDLIAYTRNSTQGLVPMLDRDFSRNIPAKSRSTFDDLDIDPDLQSSLTRQLKNYNHNKREKRKARKDREVEEAVLRNDMLIKYPEKILIKEIRAEFEALLKDESRHSMSFPTLDSHGHHTIKNMADCYHMTTDKCGKQGVRHYLKVSKTKSTFKYFPNYKRVNAIMRGRPIFHRIDRKPNPKDKKTKTISGRGSDSGGRAKFKEGDIVGAEAPEIDQNNLGRQMLERLGWSKGMGLGLSGRGINEPIVAKVKMSKTGIK</sequence>
<gene>
    <name type="primary">SQS1</name>
    <name type="ORF">LELG_00251</name>
</gene>
<protein>
    <recommendedName>
        <fullName>Protein SQS1</fullName>
    </recommendedName>
</protein>
<reference key="1">
    <citation type="journal article" date="2009" name="Nature">
        <title>Evolution of pathogenicity and sexual reproduction in eight Candida genomes.</title>
        <authorList>
            <person name="Butler G."/>
            <person name="Rasmussen M.D."/>
            <person name="Lin M.F."/>
            <person name="Santos M.A.S."/>
            <person name="Sakthikumar S."/>
            <person name="Munro C.A."/>
            <person name="Rheinbay E."/>
            <person name="Grabherr M."/>
            <person name="Forche A."/>
            <person name="Reedy J.L."/>
            <person name="Agrafioti I."/>
            <person name="Arnaud M.B."/>
            <person name="Bates S."/>
            <person name="Brown A.J.P."/>
            <person name="Brunke S."/>
            <person name="Costanzo M.C."/>
            <person name="Fitzpatrick D.A."/>
            <person name="de Groot P.W.J."/>
            <person name="Harris D."/>
            <person name="Hoyer L.L."/>
            <person name="Hube B."/>
            <person name="Klis F.M."/>
            <person name="Kodira C."/>
            <person name="Lennard N."/>
            <person name="Logue M.E."/>
            <person name="Martin R."/>
            <person name="Neiman A.M."/>
            <person name="Nikolaou E."/>
            <person name="Quail M.A."/>
            <person name="Quinn J."/>
            <person name="Santos M.C."/>
            <person name="Schmitzberger F.F."/>
            <person name="Sherlock G."/>
            <person name="Shah P."/>
            <person name="Silverstein K.A.T."/>
            <person name="Skrzypek M.S."/>
            <person name="Soll D."/>
            <person name="Staggs R."/>
            <person name="Stansfield I."/>
            <person name="Stumpf M.P.H."/>
            <person name="Sudbery P.E."/>
            <person name="Srikantha T."/>
            <person name="Zeng Q."/>
            <person name="Berman J."/>
            <person name="Berriman M."/>
            <person name="Heitman J."/>
            <person name="Gow N.A.R."/>
            <person name="Lorenz M.C."/>
            <person name="Birren B.W."/>
            <person name="Kellis M."/>
            <person name="Cuomo C.A."/>
        </authorList>
    </citation>
    <scope>NUCLEOTIDE SEQUENCE [LARGE SCALE GENOMIC DNA]</scope>
    <source>
        <strain>ATCC 11503 / BCRC 21390 / CBS 2605 / JCM 1781 / NBRC 1676 / NRRL YB-4239</strain>
    </source>
</reference>